<keyword id="KW-0007">Acetylation</keyword>
<keyword id="KW-0009">Actin-binding</keyword>
<keyword id="KW-0106">Calcium</keyword>
<keyword id="KW-1003">Cell membrane</keyword>
<keyword id="KW-0966">Cell projection</keyword>
<keyword id="KW-0963">Cytoplasm</keyword>
<keyword id="KW-0206">Cytoskeleton</keyword>
<keyword id="KW-0472">Membrane</keyword>
<keyword id="KW-0479">Metal-binding</keyword>
<keyword id="KW-0597">Phosphoprotein</keyword>
<keyword id="KW-1185">Reference proteome</keyword>
<keyword id="KW-0677">Repeat</keyword>
<comment type="function">
    <text evidence="1">Actin-binding protein that enhances membrane ruffling and RAC activation. Enhances the actin-bundling activity of LCP1. Binds calcium. Plays a role in RAC signaling and in phagocytosis. May play a role in macrophage activation and function. Promotes the proliferation of vascular smooth muscle cells and of T-lymphocytes. Enhances lymphocyte migration. Plays a role in vascular inflammation (By similarity).</text>
</comment>
<comment type="subunit">
    <text evidence="1 7">Homodimer (Potential). Monomer. Interacts with LCP1 (By similarity).</text>
</comment>
<comment type="subcellular location">
    <subcellularLocation>
        <location evidence="2">Cytoplasm</location>
        <location evidence="2">Cytoskeleton</location>
    </subcellularLocation>
    <subcellularLocation>
        <location evidence="2">Cell projection</location>
        <location evidence="2">Ruffle membrane</location>
        <topology evidence="2">Peripheral membrane protein</topology>
        <orientation evidence="2">Cytoplasmic side</orientation>
    </subcellularLocation>
    <subcellularLocation>
        <location evidence="2">Cell projection</location>
        <location evidence="2">Phagocytic cup</location>
    </subcellularLocation>
    <text evidence="2">Associated with the actin cytoskeleton at membrane ruffles and at sites of phagocytosis.</text>
</comment>
<comment type="PTM">
    <text evidence="1">Phosphorylated on serine residues.</text>
</comment>
<reference key="1">
    <citation type="journal article" date="2004" name="Mol. Biol. Evol.">
        <title>Rhesus macaque class I duplicon structures, organization, and evolution within the alpha block of the major histocompatibility complex.</title>
        <authorList>
            <person name="Kulski J.K."/>
            <person name="Anzai T."/>
            <person name="Shiina T."/>
            <person name="Inoko H."/>
        </authorList>
    </citation>
    <scope>NUCLEOTIDE SEQUENCE [LARGE SCALE GENOMIC DNA]</scope>
</reference>
<dbReference type="EMBL" id="AB128049">
    <property type="protein sequence ID" value="BAD69720.1"/>
    <property type="molecule type" value="Genomic_DNA"/>
</dbReference>
<dbReference type="RefSeq" id="NP_001040583.1">
    <property type="nucleotide sequence ID" value="NM_001047118.1"/>
</dbReference>
<dbReference type="BMRB" id="Q5TM25"/>
<dbReference type="SMR" id="Q5TM25"/>
<dbReference type="FunCoup" id="Q5TM25">
    <property type="interactions" value="69"/>
</dbReference>
<dbReference type="STRING" id="9544.ENSMMUP00000074541"/>
<dbReference type="PaxDb" id="9544-ENSMMUP00000007001"/>
<dbReference type="Ensembl" id="ENSMMUT00000088853.1">
    <property type="protein sequence ID" value="ENSMMUP00000074541.1"/>
    <property type="gene ID" value="ENSMMUG00000049735.1"/>
</dbReference>
<dbReference type="GeneID" id="574115"/>
<dbReference type="KEGG" id="mcc:574115"/>
<dbReference type="CTD" id="199"/>
<dbReference type="VEuPathDB" id="HostDB:ENSMMUG00000049735"/>
<dbReference type="VGNC" id="VGNC:81011">
    <property type="gene designation" value="AIF1"/>
</dbReference>
<dbReference type="eggNOG" id="KOG0027">
    <property type="taxonomic scope" value="Eukaryota"/>
</dbReference>
<dbReference type="GeneTree" id="ENSGT00390000013846"/>
<dbReference type="HOGENOM" id="CLU_134149_0_0_1"/>
<dbReference type="InParanoid" id="Q5TM25"/>
<dbReference type="OMA" id="RETINYH"/>
<dbReference type="OrthoDB" id="26525at2759"/>
<dbReference type="TreeFam" id="TF320736"/>
<dbReference type="Proteomes" id="UP000006718">
    <property type="component" value="Chromosome 4"/>
</dbReference>
<dbReference type="Bgee" id="ENSMMUG00000049735">
    <property type="expression patterns" value="Expressed in spleen and 18 other cell types or tissues"/>
</dbReference>
<dbReference type="ExpressionAtlas" id="Q5TM25">
    <property type="expression patterns" value="baseline"/>
</dbReference>
<dbReference type="GO" id="GO:0005884">
    <property type="term" value="C:actin filament"/>
    <property type="evidence" value="ECO:0007669"/>
    <property type="project" value="Ensembl"/>
</dbReference>
<dbReference type="GO" id="GO:0005737">
    <property type="term" value="C:cytoplasm"/>
    <property type="evidence" value="ECO:0000250"/>
    <property type="project" value="UniProtKB"/>
</dbReference>
<dbReference type="GO" id="GO:0005829">
    <property type="term" value="C:cytosol"/>
    <property type="evidence" value="ECO:0000250"/>
    <property type="project" value="UniProtKB"/>
</dbReference>
<dbReference type="GO" id="GO:0097386">
    <property type="term" value="C:glial cell projection"/>
    <property type="evidence" value="ECO:0007669"/>
    <property type="project" value="Ensembl"/>
</dbReference>
<dbReference type="GO" id="GO:0030027">
    <property type="term" value="C:lamellipodium"/>
    <property type="evidence" value="ECO:0000250"/>
    <property type="project" value="UniProtKB"/>
</dbReference>
<dbReference type="GO" id="GO:0005634">
    <property type="term" value="C:nucleus"/>
    <property type="evidence" value="ECO:0000250"/>
    <property type="project" value="UniProtKB"/>
</dbReference>
<dbReference type="GO" id="GO:0048471">
    <property type="term" value="C:perinuclear region of cytoplasm"/>
    <property type="evidence" value="ECO:0007669"/>
    <property type="project" value="Ensembl"/>
</dbReference>
<dbReference type="GO" id="GO:0001891">
    <property type="term" value="C:phagocytic cup"/>
    <property type="evidence" value="ECO:0000250"/>
    <property type="project" value="UniProtKB"/>
</dbReference>
<dbReference type="GO" id="GO:0032587">
    <property type="term" value="C:ruffle membrane"/>
    <property type="evidence" value="ECO:0007669"/>
    <property type="project" value="UniProtKB-SubCell"/>
</dbReference>
<dbReference type="GO" id="GO:0051015">
    <property type="term" value="F:actin filament binding"/>
    <property type="evidence" value="ECO:0000250"/>
    <property type="project" value="UniProtKB"/>
</dbReference>
<dbReference type="GO" id="GO:0005509">
    <property type="term" value="F:calcium ion binding"/>
    <property type="evidence" value="ECO:0000318"/>
    <property type="project" value="GO_Central"/>
</dbReference>
<dbReference type="GO" id="GO:0051764">
    <property type="term" value="P:actin crosslink formation"/>
    <property type="evidence" value="ECO:0007669"/>
    <property type="project" value="Ensembl"/>
</dbReference>
<dbReference type="GO" id="GO:0051017">
    <property type="term" value="P:actin filament bundle assembly"/>
    <property type="evidence" value="ECO:0000250"/>
    <property type="project" value="UniProtKB"/>
</dbReference>
<dbReference type="GO" id="GO:0030041">
    <property type="term" value="P:actin filament polymerization"/>
    <property type="evidence" value="ECO:0000250"/>
    <property type="project" value="UniProtKB"/>
</dbReference>
<dbReference type="GO" id="GO:0034599">
    <property type="term" value="P:cellular response to oxidative stress"/>
    <property type="evidence" value="ECO:0007669"/>
    <property type="project" value="Ensembl"/>
</dbReference>
<dbReference type="GO" id="GO:0071346">
    <property type="term" value="P:cellular response to type II interferon"/>
    <property type="evidence" value="ECO:0000250"/>
    <property type="project" value="UniProtKB"/>
</dbReference>
<dbReference type="GO" id="GO:0006954">
    <property type="term" value="P:inflammatory response"/>
    <property type="evidence" value="ECO:0000250"/>
    <property type="project" value="UniProtKB"/>
</dbReference>
<dbReference type="GO" id="GO:0071672">
    <property type="term" value="P:negative regulation of smooth muscle cell chemotaxis"/>
    <property type="evidence" value="ECO:0007669"/>
    <property type="project" value="Ensembl"/>
</dbReference>
<dbReference type="GO" id="GO:0048662">
    <property type="term" value="P:negative regulation of smooth muscle cell proliferation"/>
    <property type="evidence" value="ECO:0007669"/>
    <property type="project" value="Ensembl"/>
</dbReference>
<dbReference type="GO" id="GO:0030046">
    <property type="term" value="P:parallel actin filament bundle assembly"/>
    <property type="evidence" value="ECO:0007669"/>
    <property type="project" value="Ensembl"/>
</dbReference>
<dbReference type="GO" id="GO:0006911">
    <property type="term" value="P:phagocytosis, engulfment"/>
    <property type="evidence" value="ECO:0000250"/>
    <property type="project" value="UniProtKB"/>
</dbReference>
<dbReference type="GO" id="GO:0032722">
    <property type="term" value="P:positive regulation of chemokine production"/>
    <property type="evidence" value="ECO:0007669"/>
    <property type="project" value="Ensembl"/>
</dbReference>
<dbReference type="GO" id="GO:0090271">
    <property type="term" value="P:positive regulation of fibroblast growth factor production"/>
    <property type="evidence" value="ECO:0007669"/>
    <property type="project" value="Ensembl"/>
</dbReference>
<dbReference type="GO" id="GO:1900087">
    <property type="term" value="P:positive regulation of G1/S transition of mitotic cell cycle"/>
    <property type="evidence" value="ECO:0000250"/>
    <property type="project" value="UniProtKB"/>
</dbReference>
<dbReference type="GO" id="GO:0032755">
    <property type="term" value="P:positive regulation of interleukin-6 production"/>
    <property type="evidence" value="ECO:0007669"/>
    <property type="project" value="Ensembl"/>
</dbReference>
<dbReference type="GO" id="GO:0090026">
    <property type="term" value="P:positive regulation of monocyte chemotaxis"/>
    <property type="evidence" value="ECO:0000250"/>
    <property type="project" value="UniProtKB"/>
</dbReference>
<dbReference type="GO" id="GO:0071673">
    <property type="term" value="P:positive regulation of smooth muscle cell chemotaxis"/>
    <property type="evidence" value="ECO:0000250"/>
    <property type="project" value="UniProtKB"/>
</dbReference>
<dbReference type="GO" id="GO:0048661">
    <property type="term" value="P:positive regulation of smooth muscle cell proliferation"/>
    <property type="evidence" value="ECO:0000250"/>
    <property type="project" value="UniProtKB"/>
</dbReference>
<dbReference type="GO" id="GO:2000406">
    <property type="term" value="P:positive regulation of T cell migration"/>
    <property type="evidence" value="ECO:0000250"/>
    <property type="project" value="UniProtKB"/>
</dbReference>
<dbReference type="GO" id="GO:0042102">
    <property type="term" value="P:positive regulation of T cell proliferation"/>
    <property type="evidence" value="ECO:0000250"/>
    <property type="project" value="UniProtKB"/>
</dbReference>
<dbReference type="GO" id="GO:0016601">
    <property type="term" value="P:Rac protein signal transduction"/>
    <property type="evidence" value="ECO:0000250"/>
    <property type="project" value="UniProtKB"/>
</dbReference>
<dbReference type="GO" id="GO:0097178">
    <property type="term" value="P:ruffle assembly"/>
    <property type="evidence" value="ECO:0000250"/>
    <property type="project" value="UniProtKB"/>
</dbReference>
<dbReference type="FunFam" id="1.10.238.10:FF:000106">
    <property type="entry name" value="Allograft inflammatory factor 1"/>
    <property type="match status" value="1"/>
</dbReference>
<dbReference type="Gene3D" id="1.10.238.10">
    <property type="entry name" value="EF-hand"/>
    <property type="match status" value="1"/>
</dbReference>
<dbReference type="InterPro" id="IPR049025">
    <property type="entry name" value="AIF-1_EF_pair"/>
</dbReference>
<dbReference type="InterPro" id="IPR042433">
    <property type="entry name" value="AIF1/AIF1L"/>
</dbReference>
<dbReference type="InterPro" id="IPR011992">
    <property type="entry name" value="EF-hand-dom_pair"/>
</dbReference>
<dbReference type="InterPro" id="IPR002048">
    <property type="entry name" value="EF_hand_dom"/>
</dbReference>
<dbReference type="PANTHER" id="PTHR10356:SF4">
    <property type="entry name" value="ALLOGRAFT INFLAMMATORY FACTOR 1"/>
    <property type="match status" value="1"/>
</dbReference>
<dbReference type="PANTHER" id="PTHR10356">
    <property type="entry name" value="ALLOGRAFT INFLAMMATORY FACTOR-1"/>
    <property type="match status" value="1"/>
</dbReference>
<dbReference type="Pfam" id="PF21008">
    <property type="entry name" value="AIF-1"/>
    <property type="match status" value="1"/>
</dbReference>
<dbReference type="SUPFAM" id="SSF47473">
    <property type="entry name" value="EF-hand"/>
    <property type="match status" value="1"/>
</dbReference>
<dbReference type="PROSITE" id="PS50222">
    <property type="entry name" value="EF_HAND_2"/>
    <property type="match status" value="1"/>
</dbReference>
<proteinExistence type="inferred from homology"/>
<accession>Q5TM25</accession>
<name>AIF1_MACMU</name>
<sequence>MSQTRDLQGGKAFGLLKAQQEERLDEINKQFLDDPKYSSDEDLLSKLEGFKEKYMEFDLNGNGDIDIMSLKRMLEKLGVPKTHLELKKLIGEVSSGSGETFSYPDFLRMMLGKRSAILKMILMYEEKAREKEKPTGPPAKKAISELP</sequence>
<gene>
    <name type="primary">AIF1</name>
</gene>
<evidence type="ECO:0000250" key="1"/>
<evidence type="ECO:0000250" key="2">
    <source>
        <dbReference type="UniProtKB" id="O70200"/>
    </source>
</evidence>
<evidence type="ECO:0000250" key="3">
    <source>
        <dbReference type="UniProtKB" id="P55008"/>
    </source>
</evidence>
<evidence type="ECO:0000250" key="4">
    <source>
        <dbReference type="UniProtKB" id="P81076"/>
    </source>
</evidence>
<evidence type="ECO:0000255" key="5">
    <source>
        <dbReference type="PROSITE-ProRule" id="PRU00448"/>
    </source>
</evidence>
<evidence type="ECO:0000256" key="6">
    <source>
        <dbReference type="SAM" id="MobiDB-lite"/>
    </source>
</evidence>
<evidence type="ECO:0000305" key="7"/>
<protein>
    <recommendedName>
        <fullName>Allograft inflammatory factor 1</fullName>
        <shortName>AIF-1</shortName>
    </recommendedName>
</protein>
<organism>
    <name type="scientific">Macaca mulatta</name>
    <name type="common">Rhesus macaque</name>
    <dbReference type="NCBI Taxonomy" id="9544"/>
    <lineage>
        <taxon>Eukaryota</taxon>
        <taxon>Metazoa</taxon>
        <taxon>Chordata</taxon>
        <taxon>Craniata</taxon>
        <taxon>Vertebrata</taxon>
        <taxon>Euteleostomi</taxon>
        <taxon>Mammalia</taxon>
        <taxon>Eutheria</taxon>
        <taxon>Euarchontoglires</taxon>
        <taxon>Primates</taxon>
        <taxon>Haplorrhini</taxon>
        <taxon>Catarrhini</taxon>
        <taxon>Cercopithecidae</taxon>
        <taxon>Cercopithecinae</taxon>
        <taxon>Macaca</taxon>
    </lineage>
</organism>
<feature type="initiator methionine" description="Removed" evidence="4">
    <location>
        <position position="1"/>
    </location>
</feature>
<feature type="chain" id="PRO_0000073866" description="Allograft inflammatory factor 1">
    <location>
        <begin position="2"/>
        <end position="147"/>
    </location>
</feature>
<feature type="domain" description="EF-hand 1" evidence="5">
    <location>
        <begin position="45"/>
        <end position="80"/>
    </location>
</feature>
<feature type="domain" description="EF-hand 2" evidence="7">
    <location>
        <begin position="81"/>
        <end position="115"/>
    </location>
</feature>
<feature type="region of interest" description="Disordered" evidence="6">
    <location>
        <begin position="128"/>
        <end position="147"/>
    </location>
</feature>
<feature type="binding site" evidence="7">
    <location>
        <position position="58"/>
    </location>
    <ligand>
        <name>Ca(2+)</name>
        <dbReference type="ChEBI" id="CHEBI:29108"/>
        <label>1</label>
    </ligand>
</feature>
<feature type="binding site" evidence="7">
    <location>
        <position position="60"/>
    </location>
    <ligand>
        <name>Ca(2+)</name>
        <dbReference type="ChEBI" id="CHEBI:29108"/>
        <label>1</label>
    </ligand>
</feature>
<feature type="binding site" evidence="7">
    <location>
        <position position="62"/>
    </location>
    <ligand>
        <name>Ca(2+)</name>
        <dbReference type="ChEBI" id="CHEBI:29108"/>
        <label>1</label>
    </ligand>
</feature>
<feature type="binding site" evidence="7">
    <location>
        <position position="64"/>
    </location>
    <ligand>
        <name>Ca(2+)</name>
        <dbReference type="ChEBI" id="CHEBI:29108"/>
        <label>1</label>
    </ligand>
</feature>
<feature type="binding site" evidence="7">
    <location>
        <position position="100"/>
    </location>
    <ligand>
        <name>Ca(2+)</name>
        <dbReference type="ChEBI" id="CHEBI:29108"/>
        <label>2</label>
    </ligand>
</feature>
<feature type="binding site" evidence="7">
    <location>
        <position position="105"/>
    </location>
    <ligand>
        <name>Ca(2+)</name>
        <dbReference type="ChEBI" id="CHEBI:29108"/>
        <label>2</label>
    </ligand>
</feature>
<feature type="modified residue" description="N-acetylserine" evidence="4">
    <location>
        <position position="2"/>
    </location>
</feature>
<feature type="modified residue" description="N6-acetyllysine" evidence="3">
    <location>
        <position position="11"/>
    </location>
</feature>
<feature type="modified residue" description="Phosphoserine" evidence="3">
    <location>
        <position position="39"/>
    </location>
</feature>